<accession>P00881</accession>
<sequence length="48" mass="5570">MDEKQRYDAGMQVRRAVLGDAHVDRCLEKLNDFNGEFQEMITRHACGD</sequence>
<organism>
    <name type="scientific">Pseudomonas putida</name>
    <name type="common">Arthrobacter siderocapsulatus</name>
    <dbReference type="NCBI Taxonomy" id="303"/>
    <lineage>
        <taxon>Bacteria</taxon>
        <taxon>Pseudomonadati</taxon>
        <taxon>Pseudomonadota</taxon>
        <taxon>Gammaproteobacteria</taxon>
        <taxon>Pseudomonadales</taxon>
        <taxon>Pseudomonadaceae</taxon>
        <taxon>Pseudomonas</taxon>
    </lineage>
</organism>
<feature type="chain" id="PRO_0000079799" description="4-carboxymuconolactone decarboxylase">
    <location>
        <begin position="1"/>
        <end position="48" status="greater than"/>
    </location>
</feature>
<feature type="non-terminal residue">
    <location>
        <position position="48"/>
    </location>
</feature>
<keyword id="KW-0058">Aromatic hydrocarbons catabolism</keyword>
<keyword id="KW-0210">Decarboxylase</keyword>
<keyword id="KW-0903">Direct protein sequencing</keyword>
<keyword id="KW-0456">Lyase</keyword>
<protein>
    <recommendedName>
        <fullName evidence="2">4-carboxymuconolactone decarboxylase</fullName>
        <shortName evidence="2">CMD</shortName>
        <ecNumber evidence="1">4.1.1.44</ecNumber>
    </recommendedName>
</protein>
<comment type="catalytic activity">
    <reaction evidence="1">
        <text>(R)-2-(carboxymethyl)-5-oxo-2,5-dihydro-2-furoate + H(+) = (4,5-dihydro-5-oxofuran-2-yl)-acetate + CO2</text>
        <dbReference type="Rhea" id="RHEA:23348"/>
        <dbReference type="ChEBI" id="CHEBI:15378"/>
        <dbReference type="ChEBI" id="CHEBI:16526"/>
        <dbReference type="ChEBI" id="CHEBI:58425"/>
        <dbReference type="ChEBI" id="CHEBI:58771"/>
        <dbReference type="EC" id="4.1.1.44"/>
    </reaction>
    <physiologicalReaction direction="left-to-right" evidence="1">
        <dbReference type="Rhea" id="RHEA:23349"/>
    </physiologicalReaction>
</comment>
<comment type="pathway">
    <text evidence="1">Aromatic compound metabolism; beta-ketoadipate pathway; 5-oxo-4,5-dihydro-2-furylacetate from 3-carboxy-cis,cis-muconate: step 2/2.</text>
</comment>
<comment type="similarity">
    <text evidence="3">Belongs to the carboxymuconolactone decarboxylase family.</text>
</comment>
<proteinExistence type="evidence at protein level"/>
<evidence type="ECO:0000269" key="1">
    <source>
    </source>
</evidence>
<evidence type="ECO:0000303" key="2">
    <source>
    </source>
</evidence>
<evidence type="ECO:0000305" key="3"/>
<name>DC4C_PSEPU</name>
<dbReference type="EC" id="4.1.1.44" evidence="1"/>
<dbReference type="PIR" id="A01101">
    <property type="entry name" value="DCPSMP"/>
</dbReference>
<dbReference type="eggNOG" id="COG0599">
    <property type="taxonomic scope" value="Bacteria"/>
</dbReference>
<dbReference type="BioCyc" id="MetaCyc:MONOMER-3206"/>
<dbReference type="UniPathway" id="UPA00157">
    <property type="reaction ID" value="UER00266"/>
</dbReference>
<dbReference type="GO" id="GO:0047575">
    <property type="term" value="F:4-carboxymuconolactone decarboxylase activity"/>
    <property type="evidence" value="ECO:0007669"/>
    <property type="project" value="UniProtKB-EC"/>
</dbReference>
<dbReference type="GO" id="GO:0009056">
    <property type="term" value="P:catabolic process"/>
    <property type="evidence" value="ECO:0007669"/>
    <property type="project" value="UniProtKB-KW"/>
</dbReference>
<dbReference type="Gene3D" id="1.20.1290.10">
    <property type="entry name" value="AhpD-like"/>
    <property type="match status" value="1"/>
</dbReference>
<dbReference type="InterPro" id="IPR029032">
    <property type="entry name" value="AhpD-like"/>
</dbReference>
<dbReference type="SUPFAM" id="SSF69118">
    <property type="entry name" value="AhpD-like"/>
    <property type="match status" value="1"/>
</dbReference>
<reference key="1">
    <citation type="journal article" date="1980" name="J. Biol. Chem.">
        <title>Homologies in the NH2-terminal amino acid sequences of gamma-carboxymuconolactone decarboxylases and muconolactone isomerases.</title>
        <authorList>
            <person name="Yeh W.-K."/>
            <person name="Fletcher P."/>
            <person name="Ornston L.N."/>
        </authorList>
    </citation>
    <scope>PROTEIN SEQUENCE</scope>
</reference>
<reference key="2">
    <citation type="journal article" date="1979" name="Biochim. Biophys. Acta">
        <title>Structural comparison of gamma-carboxymuconolactone decarboxylase and muconolactone isomerase from Pseudomonas putida.</title>
        <authorList>
            <person name="Parke D."/>
        </authorList>
    </citation>
    <scope>PROTEIN SEQUENCE OF 1-12</scope>
    <scope>CATALYTIC ACTIVITY</scope>
</reference>